<organism>
    <name type="scientific">Rattus norvegicus</name>
    <name type="common">Rat</name>
    <dbReference type="NCBI Taxonomy" id="10116"/>
    <lineage>
        <taxon>Eukaryota</taxon>
        <taxon>Metazoa</taxon>
        <taxon>Chordata</taxon>
        <taxon>Craniata</taxon>
        <taxon>Vertebrata</taxon>
        <taxon>Euteleostomi</taxon>
        <taxon>Mammalia</taxon>
        <taxon>Eutheria</taxon>
        <taxon>Euarchontoglires</taxon>
        <taxon>Glires</taxon>
        <taxon>Rodentia</taxon>
        <taxon>Myomorpha</taxon>
        <taxon>Muroidea</taxon>
        <taxon>Muridae</taxon>
        <taxon>Murinae</taxon>
        <taxon>Rattus</taxon>
    </lineage>
</organism>
<protein>
    <recommendedName>
        <fullName evidence="1">Adenosine 5'-monophosphoramidase HINT1</fullName>
        <ecNumber evidence="1">3.9.1.-</ecNumber>
    </recommendedName>
    <alternativeName>
        <fullName>17 kDa inhibitor of protein kinase C</fullName>
    </alternativeName>
    <alternativeName>
        <fullName evidence="1">Desumoylating isopeptidase HINT1</fullName>
        <ecNumber evidence="1">3.4.22.-</ecNumber>
    </alternativeName>
    <alternativeName>
        <fullName>Histidine triad nucleotide-binding protein 1</fullName>
    </alternativeName>
    <alternativeName>
        <fullName>Protein kinase C inhibitor 1</fullName>
    </alternativeName>
    <alternativeName>
        <fullName>Protein kinase C-interacting protein 1</fullName>
        <shortName>PKCI-1</shortName>
    </alternativeName>
</protein>
<sequence>MADEIAKAQVAQPGGDTIFGKIIRKEIPAKIIFEDDRCLAFHDISPQAPTHFLVIPKKHISQISVADDDDESLLGHLMIVGKKCAADLGLKRGYRMVVNEGADGGQSVYHIHLHVLGGRQMNWPPG</sequence>
<evidence type="ECO:0000250" key="1">
    <source>
        <dbReference type="UniProtKB" id="P49773"/>
    </source>
</evidence>
<evidence type="ECO:0000250" key="2">
    <source>
        <dbReference type="UniProtKB" id="P62958"/>
    </source>
</evidence>
<evidence type="ECO:0000250" key="3">
    <source>
        <dbReference type="UniProtKB" id="P70349"/>
    </source>
</evidence>
<evidence type="ECO:0000255" key="4">
    <source>
        <dbReference type="PROSITE-ProRule" id="PRU00464"/>
    </source>
</evidence>
<evidence type="ECO:0000305" key="5"/>
<name>HINT1_RAT</name>
<feature type="initiator methionine" description="Removed" evidence="2">
    <location>
        <position position="1"/>
    </location>
</feature>
<feature type="chain" id="PRO_0000109784" description="Adenosine 5'-monophosphoramidase HINT1">
    <location>
        <begin position="2"/>
        <end position="126"/>
    </location>
</feature>
<feature type="domain" description="HIT" evidence="4">
    <location>
        <begin position="18"/>
        <end position="126"/>
    </location>
</feature>
<feature type="short sequence motif" description="Histidine triad motif">
    <location>
        <begin position="110"/>
        <end position="114"/>
    </location>
</feature>
<feature type="active site" description="Tele-AMP-histidine intermediate" evidence="1">
    <location>
        <position position="112"/>
    </location>
</feature>
<feature type="binding site" evidence="1">
    <location>
        <begin position="43"/>
        <end position="44"/>
    </location>
    <ligand>
        <name>AMP</name>
        <dbReference type="ChEBI" id="CHEBI:456215"/>
    </ligand>
</feature>
<feature type="binding site" evidence="1">
    <location>
        <position position="99"/>
    </location>
    <ligand>
        <name>AMP</name>
        <dbReference type="ChEBI" id="CHEBI:456215"/>
    </ligand>
</feature>
<feature type="binding site" evidence="1">
    <location>
        <begin position="105"/>
        <end position="107"/>
    </location>
    <ligand>
        <name>AMP</name>
        <dbReference type="ChEBI" id="CHEBI:456215"/>
    </ligand>
</feature>
<feature type="binding site" evidence="1">
    <location>
        <begin position="112"/>
        <end position="114"/>
    </location>
    <ligand>
        <name>AMP</name>
        <dbReference type="ChEBI" id="CHEBI:456215"/>
    </ligand>
</feature>
<feature type="modified residue" description="N-acetylalanine" evidence="2">
    <location>
        <position position="2"/>
    </location>
</feature>
<feature type="modified residue" description="N6-acetyllysine" evidence="1">
    <location>
        <position position="21"/>
    </location>
</feature>
<feature type="modified residue" description="N6-acetyllysine" evidence="1">
    <location>
        <position position="30"/>
    </location>
</feature>
<feature type="modified residue" description="Phosphoserine" evidence="3">
    <location>
        <position position="45"/>
    </location>
</feature>
<feature type="modified residue" description="Phosphoserine" evidence="3">
    <location>
        <position position="72"/>
    </location>
</feature>
<feature type="sequence conflict" description="In Ref. 1; AAA18398." evidence="5" ref="1">
    <original>Q</original>
    <variation>R</variation>
    <location>
        <position position="12"/>
    </location>
</feature>
<feature type="sequence conflict" description="In Ref. 1; AAA18398." evidence="5" ref="1">
    <original>F</original>
    <variation>Y</variation>
    <location>
        <position position="33"/>
    </location>
</feature>
<feature type="sequence conflict" description="In Ref. 1; AAA18398." evidence="5" ref="1">
    <original>R</original>
    <variation>Q</variation>
    <location>
        <position position="37"/>
    </location>
</feature>
<feature type="sequence conflict" description="In Ref. 1; AAA18398." evidence="5" ref="1">
    <original>H</original>
    <variation>Y</variation>
    <location>
        <position position="59"/>
    </location>
</feature>
<feature type="sequence conflict" description="In Ref. 1; AAA18398." evidence="5" ref="1">
    <original>V</original>
    <variation>A</variation>
    <location>
        <position position="65"/>
    </location>
</feature>
<feature type="sequence conflict" description="In Ref. 1; AAA18398." evidence="5" ref="1">
    <original>D</original>
    <variation>E</variation>
    <location>
        <position position="67"/>
    </location>
</feature>
<feature type="sequence conflict" description="In Ref. 1; AAA18398." evidence="5" ref="1">
    <original>R</original>
    <variation>K</variation>
    <location>
        <position position="92"/>
    </location>
</feature>
<feature type="sequence conflict" description="In Ref. 1; AAA18398." evidence="5" ref="1">
    <original>A</original>
    <variation>S</variation>
    <location>
        <position position="102"/>
    </location>
</feature>
<feature type="sequence conflict" description="In Ref. 1; AAA18398." evidence="5" ref="1">
    <original>I</original>
    <variation>V</variation>
    <location>
        <position position="111"/>
    </location>
</feature>
<accession>P62959</accession>
<accession>B5DEM9</accession>
<accession>P16436</accession>
<dbReference type="EC" id="3.9.1.-" evidence="1"/>
<dbReference type="EC" id="3.4.22.-" evidence="1"/>
<dbReference type="EMBL" id="U09407">
    <property type="protein sequence ID" value="AAA18398.1"/>
    <property type="molecule type" value="mRNA"/>
</dbReference>
<dbReference type="EMBL" id="CH473948">
    <property type="protein sequence ID" value="EDM04446.1"/>
    <property type="molecule type" value="Genomic_DNA"/>
</dbReference>
<dbReference type="EMBL" id="BC168732">
    <property type="protein sequence ID" value="AAI68732.1"/>
    <property type="molecule type" value="mRNA"/>
</dbReference>
<dbReference type="PIR" id="A59489">
    <property type="entry name" value="A59489"/>
</dbReference>
<dbReference type="RefSeq" id="NP_001103077.1">
    <property type="nucleotide sequence ID" value="NM_001109607.1"/>
</dbReference>
<dbReference type="BMRB" id="P62959"/>
<dbReference type="SMR" id="P62959"/>
<dbReference type="BioGRID" id="605472">
    <property type="interactions" value="1"/>
</dbReference>
<dbReference type="CORUM" id="P62959"/>
<dbReference type="FunCoup" id="P62959">
    <property type="interactions" value="1423"/>
</dbReference>
<dbReference type="IntAct" id="P62959">
    <property type="interactions" value="1"/>
</dbReference>
<dbReference type="MINT" id="P62959"/>
<dbReference type="STRING" id="10116.ENSRNOP00000000772"/>
<dbReference type="BindingDB" id="P62959"/>
<dbReference type="iPTMnet" id="P62959"/>
<dbReference type="PhosphoSitePlus" id="P62959"/>
<dbReference type="SwissPalm" id="P62959"/>
<dbReference type="jPOST" id="P62959"/>
<dbReference type="PaxDb" id="10116-ENSRNOP00000000772"/>
<dbReference type="GeneID" id="690660"/>
<dbReference type="KEGG" id="rno:690660"/>
<dbReference type="AGR" id="RGD:1593411"/>
<dbReference type="CTD" id="3094"/>
<dbReference type="RGD" id="1593411">
    <property type="gene designation" value="Hint1"/>
</dbReference>
<dbReference type="eggNOG" id="KOG3275">
    <property type="taxonomic scope" value="Eukaryota"/>
</dbReference>
<dbReference type="HOGENOM" id="CLU_056776_8_1_1"/>
<dbReference type="InParanoid" id="P62959"/>
<dbReference type="OrthoDB" id="672793at2759"/>
<dbReference type="PhylomeDB" id="P62959"/>
<dbReference type="TreeFam" id="TF314862"/>
<dbReference type="Reactome" id="R-RNO-9824594">
    <property type="pathway name" value="Regulation of MITF-M-dependent genes involved in apoptosis"/>
</dbReference>
<dbReference type="Reactome" id="R-RNO-9825892">
    <property type="pathway name" value="Regulation of MITF-M-dependent genes involved in cell cycle and proliferation"/>
</dbReference>
<dbReference type="Reactome" id="R-RNO-9856649">
    <property type="pathway name" value="Transcriptional and post-translational regulation of MITF-M expression and activity"/>
</dbReference>
<dbReference type="PRO" id="PR:P62959"/>
<dbReference type="Proteomes" id="UP000002494">
    <property type="component" value="Chromosome 10"/>
</dbReference>
<dbReference type="Proteomes" id="UP000234681">
    <property type="component" value="Chromosome 10"/>
</dbReference>
<dbReference type="Bgee" id="ENSRNOG00000000622">
    <property type="expression patterns" value="Expressed in duodenum and 19 other cell types or tissues"/>
</dbReference>
<dbReference type="GO" id="GO:0005737">
    <property type="term" value="C:cytoplasm"/>
    <property type="evidence" value="ECO:0000250"/>
    <property type="project" value="UniProtKB"/>
</dbReference>
<dbReference type="GO" id="GO:0000118">
    <property type="term" value="C:histone deacetylase complex"/>
    <property type="evidence" value="ECO:0000250"/>
    <property type="project" value="UniProtKB"/>
</dbReference>
<dbReference type="GO" id="GO:0005634">
    <property type="term" value="C:nucleus"/>
    <property type="evidence" value="ECO:0000250"/>
    <property type="project" value="UniProtKB"/>
</dbReference>
<dbReference type="GO" id="GO:0043530">
    <property type="term" value="F:adenosine 5'-monophosphoramidase activity"/>
    <property type="evidence" value="ECO:0000250"/>
    <property type="project" value="UniProtKB"/>
</dbReference>
<dbReference type="GO" id="GO:0016929">
    <property type="term" value="F:deSUMOylase activity"/>
    <property type="evidence" value="ECO:0000250"/>
    <property type="project" value="UniProtKB"/>
</dbReference>
<dbReference type="GO" id="GO:0016787">
    <property type="term" value="F:hydrolase activity"/>
    <property type="evidence" value="ECO:0000250"/>
    <property type="project" value="UniProtKB"/>
</dbReference>
<dbReference type="GO" id="GO:0000166">
    <property type="term" value="F:nucleotide binding"/>
    <property type="evidence" value="ECO:0007669"/>
    <property type="project" value="UniProtKB-KW"/>
</dbReference>
<dbReference type="GO" id="GO:0072332">
    <property type="term" value="P:intrinsic apoptotic signaling pathway by p53 class mediator"/>
    <property type="evidence" value="ECO:0000250"/>
    <property type="project" value="UniProtKB"/>
</dbReference>
<dbReference type="GO" id="GO:0050850">
    <property type="term" value="P:positive regulation of calcium-mediated signaling"/>
    <property type="evidence" value="ECO:0000266"/>
    <property type="project" value="RGD"/>
</dbReference>
<dbReference type="GO" id="GO:0016926">
    <property type="term" value="P:protein desumoylation"/>
    <property type="evidence" value="ECO:0000250"/>
    <property type="project" value="UniProtKB"/>
</dbReference>
<dbReference type="GO" id="GO:0006508">
    <property type="term" value="P:proteolysis"/>
    <property type="evidence" value="ECO:0007669"/>
    <property type="project" value="UniProtKB-KW"/>
</dbReference>
<dbReference type="GO" id="GO:0009154">
    <property type="term" value="P:purine ribonucleotide catabolic process"/>
    <property type="evidence" value="ECO:0000250"/>
    <property type="project" value="UniProtKB"/>
</dbReference>
<dbReference type="GO" id="GO:0006355">
    <property type="term" value="P:regulation of DNA-templated transcription"/>
    <property type="evidence" value="ECO:0000250"/>
    <property type="project" value="UniProtKB"/>
</dbReference>
<dbReference type="CDD" id="cd01276">
    <property type="entry name" value="PKCI_related"/>
    <property type="match status" value="1"/>
</dbReference>
<dbReference type="FunFam" id="3.30.428.10:FF:000005">
    <property type="entry name" value="Histidine triad nucleotide-binding protein 1"/>
    <property type="match status" value="1"/>
</dbReference>
<dbReference type="Gene3D" id="3.30.428.10">
    <property type="entry name" value="HIT-like"/>
    <property type="match status" value="1"/>
</dbReference>
<dbReference type="InterPro" id="IPR019808">
    <property type="entry name" value="Histidine_triad_CS"/>
</dbReference>
<dbReference type="InterPro" id="IPR001310">
    <property type="entry name" value="Histidine_triad_HIT"/>
</dbReference>
<dbReference type="InterPro" id="IPR011146">
    <property type="entry name" value="HIT-like"/>
</dbReference>
<dbReference type="InterPro" id="IPR036265">
    <property type="entry name" value="HIT-like_sf"/>
</dbReference>
<dbReference type="PANTHER" id="PTHR23089">
    <property type="entry name" value="HISTIDINE TRIAD HIT PROTEIN"/>
    <property type="match status" value="1"/>
</dbReference>
<dbReference type="Pfam" id="PF01230">
    <property type="entry name" value="HIT"/>
    <property type="match status" value="1"/>
</dbReference>
<dbReference type="PRINTS" id="PR00332">
    <property type="entry name" value="HISTRIAD"/>
</dbReference>
<dbReference type="SUPFAM" id="SSF54197">
    <property type="entry name" value="HIT-like"/>
    <property type="match status" value="1"/>
</dbReference>
<dbReference type="PROSITE" id="PS00892">
    <property type="entry name" value="HIT_1"/>
    <property type="match status" value="1"/>
</dbReference>
<dbReference type="PROSITE" id="PS51084">
    <property type="entry name" value="HIT_2"/>
    <property type="match status" value="1"/>
</dbReference>
<gene>
    <name type="primary">Hint1</name>
    <name type="synonym">Hint</name>
    <name type="synonym">Pkci1</name>
</gene>
<proteinExistence type="evidence at protein level"/>
<keyword id="KW-0007">Acetylation</keyword>
<keyword id="KW-0053">Apoptosis</keyword>
<keyword id="KW-0963">Cytoplasm</keyword>
<keyword id="KW-0903">Direct protein sequencing</keyword>
<keyword id="KW-0378">Hydrolase</keyword>
<keyword id="KW-0547">Nucleotide-binding</keyword>
<keyword id="KW-0539">Nucleus</keyword>
<keyword id="KW-0597">Phosphoprotein</keyword>
<keyword id="KW-0645">Protease</keyword>
<keyword id="KW-1185">Reference proteome</keyword>
<keyword id="KW-0788">Thiol protease</keyword>
<keyword id="KW-0804">Transcription</keyword>
<keyword id="KW-0805">Transcription regulation</keyword>
<keyword id="KW-0833">Ubl conjugation pathway</keyword>
<reference key="1">
    <citation type="submission" date="1994-05" db="EMBL/GenBank/DDBJ databases">
        <title>Cloning of a putative inhibitor of protein kinase C from several species.</title>
        <authorList>
            <person name="Waller S.J."/>
            <person name="Murphy D."/>
        </authorList>
    </citation>
    <scope>NUCLEOTIDE SEQUENCE [MRNA]</scope>
    <source>
        <tissue>Hypothalamus</tissue>
    </source>
</reference>
<reference key="2">
    <citation type="submission" date="2005-07" db="EMBL/GenBank/DDBJ databases">
        <authorList>
            <person name="Mural R.J."/>
            <person name="Adams M.D."/>
            <person name="Myers E.W."/>
            <person name="Smith H.O."/>
            <person name="Venter J.C."/>
        </authorList>
    </citation>
    <scope>NUCLEOTIDE SEQUENCE [LARGE SCALE GENOMIC DNA]</scope>
</reference>
<reference key="3">
    <citation type="journal article" date="2004" name="Genome Res.">
        <title>The status, quality, and expansion of the NIH full-length cDNA project: the Mammalian Gene Collection (MGC).</title>
        <authorList>
            <consortium name="The MGC Project Team"/>
        </authorList>
    </citation>
    <scope>NUCLEOTIDE SEQUENCE [LARGE SCALE MRNA]</scope>
    <source>
        <tissue>Pituitary</tissue>
    </source>
</reference>
<reference key="4">
    <citation type="submission" date="2003-06" db="UniProtKB">
        <title>Purification of PKCI from rat liver.</title>
        <authorList>
            <person name="Negoro M."/>
            <person name="Wakabayashi I."/>
        </authorList>
    </citation>
    <scope>PROTEIN SEQUENCE OF 31-37</scope>
    <source>
        <strain>Wistar</strain>
        <tissue>Liver</tissue>
    </source>
</reference>
<reference key="5">
    <citation type="submission" date="2007-04" db="UniProtKB">
        <authorList>
            <person name="Lubec G."/>
            <person name="Chen W.-Q."/>
            <person name="Diao W."/>
            <person name="Afjehi-Sadat L."/>
        </authorList>
    </citation>
    <scope>PROTEIN SEQUENCE OF 37-57; 58-82 AND 96-119</scope>
    <scope>IDENTIFICATION BY MASS SPECTROMETRY</scope>
    <source>
        <strain>Sprague-Dawley</strain>
        <tissue>Hippocampus</tissue>
        <tissue>Spinal cord</tissue>
    </source>
</reference>
<reference key="6">
    <citation type="submission" date="2008-12" db="UniProtKB">
        <authorList>
            <person name="Maurya D.K."/>
            <person name="Bhargava P."/>
        </authorList>
    </citation>
    <scope>IDENTIFICATION BY MASS SPECTROMETRY</scope>
</reference>
<comment type="function">
    <text evidence="1 3">Exhibits adenosine 5'-monophosphoramidase activity, hydrolyzing purine nucleotide phosphoramidates with a single phosphate group such as adenosine 5'monophosphoramidate (AMP-NH2) to yield AMP and NH2 (By similarity). Hydrolyzes adenosine 5'monophosphomorpholidate (AMP-morpholidate) and guanosine 5'monophosphomorpholidate (GMP-morpholidate) (By similarity). Hydrolyzes lysyl-AMP (AMP-N-epsilon-(N-alpha-acetyl lysine methyl ester)) generated by lysine tRNA ligase, as well as Met-AMP, His-AMP and Asp-AMP, lysyl-GMP (GMP-N-epsilon-(N-alpha-acetyl lysine methyl ester)) and AMP-N-alanine methyl ester (By similarity). Can also convert adenosine 5'-O-phosphorothioate and guanosine 5'-O-phosphorothioate to the corresponding nucleoside 5'-O-phosphates with concomitant release of hydrogen sulfide (By similarity). In addition, functions as a scaffolding protein that modulates transcriptional activation by the LEF1/TCF1-CTNNB1 complex and by the complex formed with MITF and CTNNB1 (By similarity). Modulates p53/TP53 levels and p53/TP53-mediated apoptosis. Modulates proteasomal degradation of target proteins by the SCF (SKP2-CUL1-F-box protein) E3 ubiquitin-protein ligase complex (By similarity). Also exhibits SUMO-specific isopeptidase activity, deconjugating SUMO1 from RANGAP1 and RGS17 (By similarity).</text>
</comment>
<comment type="catalytic activity">
    <reaction evidence="1">
        <text>adenosine 5'-phosphoramidate + H2O = AMP + NH4(+)</text>
        <dbReference type="Rhea" id="RHEA:67916"/>
        <dbReference type="ChEBI" id="CHEBI:15377"/>
        <dbReference type="ChEBI" id="CHEBI:28938"/>
        <dbReference type="ChEBI" id="CHEBI:57890"/>
        <dbReference type="ChEBI" id="CHEBI:456215"/>
    </reaction>
</comment>
<comment type="subunit">
    <text evidence="1 3">Homodimer (By similarity). Interacts with CDK7 (By similarity). Interacts with RUVBL1 and RUVBL2 and is associated with the LEF1/TCF1-CTNNB1 complex and with a KAT5 histone acetyltransferase complex (By similarity). Identified in a complex with MITF and CTNNB1 (By similarity). Interacts with CDC34 and RBX1, and is part of a SCF (SKP2-CUL1-F-box protein) E3 ubiquitin-protein ligase complex (By similarity). Interacts with SUMO1, SUMO2 and RGS17 (By similarity). Interacts with the Ten-1 ICD form of TENM1 (By similarity). Interacts with CALM1; interaction increases in the presence of calcium ions (By similarity).</text>
</comment>
<comment type="subcellular location">
    <subcellularLocation>
        <location evidence="1">Cytoplasm</location>
    </subcellularLocation>
    <subcellularLocation>
        <location evidence="1">Nucleus</location>
    </subcellularLocation>
</comment>
<comment type="similarity">
    <text evidence="5">Belongs to the HINT family.</text>
</comment>
<comment type="caution">
    <text evidence="5">Was originally thought to be a protein kinase C inhibitor and to bind zinc in solution. Both seem to be incorrect.</text>
</comment>